<proteinExistence type="inferred from homology"/>
<comment type="function">
    <text evidence="1">Protein S19 forms a complex with S13 that binds strongly to the 16S ribosomal RNA.</text>
</comment>
<comment type="similarity">
    <text evidence="1">Belongs to the universal ribosomal protein uS19 family.</text>
</comment>
<keyword id="KW-0687">Ribonucleoprotein</keyword>
<keyword id="KW-0689">Ribosomal protein</keyword>
<keyword id="KW-0694">RNA-binding</keyword>
<keyword id="KW-0699">rRNA-binding</keyword>
<sequence length="92" mass="10444">MARSVWKGPFVDGYLLKKAEKVREGGRNEVIKMWSRRSTILPQFVGLTFGVYNGNKHVPVSVSEEMVGHKFGEFAPTRTYYGHGADKKAKRK</sequence>
<protein>
    <recommendedName>
        <fullName evidence="1">Small ribosomal subunit protein uS19</fullName>
    </recommendedName>
    <alternativeName>
        <fullName evidence="2">30S ribosomal protein S19</fullName>
    </alternativeName>
</protein>
<name>RS19_SINMW</name>
<dbReference type="EMBL" id="CP000738">
    <property type="protein sequence ID" value="ABR59843.1"/>
    <property type="molecule type" value="Genomic_DNA"/>
</dbReference>
<dbReference type="RefSeq" id="WP_002964358.1">
    <property type="nucleotide sequence ID" value="NC_009636.1"/>
</dbReference>
<dbReference type="RefSeq" id="YP_001326678.1">
    <property type="nucleotide sequence ID" value="NC_009636.1"/>
</dbReference>
<dbReference type="SMR" id="A6U863"/>
<dbReference type="STRING" id="366394.Smed_0990"/>
<dbReference type="GeneID" id="97533528"/>
<dbReference type="KEGG" id="smd:Smed_0990"/>
<dbReference type="PATRIC" id="fig|366394.8.peg.4111"/>
<dbReference type="eggNOG" id="COG0185">
    <property type="taxonomic scope" value="Bacteria"/>
</dbReference>
<dbReference type="HOGENOM" id="CLU_144911_0_1_5"/>
<dbReference type="OrthoDB" id="9797833at2"/>
<dbReference type="PRO" id="PR:A6U863"/>
<dbReference type="Proteomes" id="UP000001108">
    <property type="component" value="Chromosome"/>
</dbReference>
<dbReference type="GO" id="GO:0005737">
    <property type="term" value="C:cytoplasm"/>
    <property type="evidence" value="ECO:0007669"/>
    <property type="project" value="UniProtKB-ARBA"/>
</dbReference>
<dbReference type="GO" id="GO:0015935">
    <property type="term" value="C:small ribosomal subunit"/>
    <property type="evidence" value="ECO:0007669"/>
    <property type="project" value="InterPro"/>
</dbReference>
<dbReference type="GO" id="GO:0019843">
    <property type="term" value="F:rRNA binding"/>
    <property type="evidence" value="ECO:0007669"/>
    <property type="project" value="UniProtKB-UniRule"/>
</dbReference>
<dbReference type="GO" id="GO:0003735">
    <property type="term" value="F:structural constituent of ribosome"/>
    <property type="evidence" value="ECO:0007669"/>
    <property type="project" value="InterPro"/>
</dbReference>
<dbReference type="GO" id="GO:0000028">
    <property type="term" value="P:ribosomal small subunit assembly"/>
    <property type="evidence" value="ECO:0007669"/>
    <property type="project" value="TreeGrafter"/>
</dbReference>
<dbReference type="GO" id="GO:0006412">
    <property type="term" value="P:translation"/>
    <property type="evidence" value="ECO:0007669"/>
    <property type="project" value="UniProtKB-UniRule"/>
</dbReference>
<dbReference type="FunFam" id="3.30.860.10:FF:000001">
    <property type="entry name" value="30S ribosomal protein S19"/>
    <property type="match status" value="1"/>
</dbReference>
<dbReference type="Gene3D" id="3.30.860.10">
    <property type="entry name" value="30s Ribosomal Protein S19, Chain A"/>
    <property type="match status" value="1"/>
</dbReference>
<dbReference type="HAMAP" id="MF_00531">
    <property type="entry name" value="Ribosomal_uS19"/>
    <property type="match status" value="1"/>
</dbReference>
<dbReference type="InterPro" id="IPR002222">
    <property type="entry name" value="Ribosomal_uS19"/>
</dbReference>
<dbReference type="InterPro" id="IPR005732">
    <property type="entry name" value="Ribosomal_uS19_bac-type"/>
</dbReference>
<dbReference type="InterPro" id="IPR020934">
    <property type="entry name" value="Ribosomal_uS19_CS"/>
</dbReference>
<dbReference type="InterPro" id="IPR023575">
    <property type="entry name" value="Ribosomal_uS19_SF"/>
</dbReference>
<dbReference type="NCBIfam" id="TIGR01050">
    <property type="entry name" value="rpsS_bact"/>
    <property type="match status" value="1"/>
</dbReference>
<dbReference type="PANTHER" id="PTHR11880">
    <property type="entry name" value="RIBOSOMAL PROTEIN S19P FAMILY MEMBER"/>
    <property type="match status" value="1"/>
</dbReference>
<dbReference type="PANTHER" id="PTHR11880:SF8">
    <property type="entry name" value="SMALL RIBOSOMAL SUBUNIT PROTEIN US19M"/>
    <property type="match status" value="1"/>
</dbReference>
<dbReference type="Pfam" id="PF00203">
    <property type="entry name" value="Ribosomal_S19"/>
    <property type="match status" value="1"/>
</dbReference>
<dbReference type="PIRSF" id="PIRSF002144">
    <property type="entry name" value="Ribosomal_S19"/>
    <property type="match status" value="1"/>
</dbReference>
<dbReference type="PRINTS" id="PR00975">
    <property type="entry name" value="RIBOSOMALS19"/>
</dbReference>
<dbReference type="SUPFAM" id="SSF54570">
    <property type="entry name" value="Ribosomal protein S19"/>
    <property type="match status" value="1"/>
</dbReference>
<dbReference type="PROSITE" id="PS00323">
    <property type="entry name" value="RIBOSOMAL_S19"/>
    <property type="match status" value="1"/>
</dbReference>
<gene>
    <name evidence="1" type="primary">rpsS</name>
    <name type="ordered locus">Smed_0990</name>
</gene>
<feature type="chain" id="PRO_1000051127" description="Small ribosomal subunit protein uS19">
    <location>
        <begin position="1"/>
        <end position="92"/>
    </location>
</feature>
<evidence type="ECO:0000255" key="1">
    <source>
        <dbReference type="HAMAP-Rule" id="MF_00531"/>
    </source>
</evidence>
<evidence type="ECO:0000305" key="2"/>
<reference key="1">
    <citation type="submission" date="2007-06" db="EMBL/GenBank/DDBJ databases">
        <title>Complete sequence of Sinorhizobium medicae WSM419 chromosome.</title>
        <authorList>
            <consortium name="US DOE Joint Genome Institute"/>
            <person name="Copeland A."/>
            <person name="Lucas S."/>
            <person name="Lapidus A."/>
            <person name="Barry K."/>
            <person name="Glavina del Rio T."/>
            <person name="Dalin E."/>
            <person name="Tice H."/>
            <person name="Pitluck S."/>
            <person name="Chain P."/>
            <person name="Malfatti S."/>
            <person name="Shin M."/>
            <person name="Vergez L."/>
            <person name="Schmutz J."/>
            <person name="Larimer F."/>
            <person name="Land M."/>
            <person name="Hauser L."/>
            <person name="Kyrpides N."/>
            <person name="Mikhailova N."/>
            <person name="Reeve W.G."/>
            <person name="Richardson P."/>
        </authorList>
    </citation>
    <scope>NUCLEOTIDE SEQUENCE [LARGE SCALE GENOMIC DNA]</scope>
    <source>
        <strain>WSM419</strain>
    </source>
</reference>
<organism>
    <name type="scientific">Sinorhizobium medicae (strain WSM419)</name>
    <name type="common">Ensifer medicae</name>
    <dbReference type="NCBI Taxonomy" id="366394"/>
    <lineage>
        <taxon>Bacteria</taxon>
        <taxon>Pseudomonadati</taxon>
        <taxon>Pseudomonadota</taxon>
        <taxon>Alphaproteobacteria</taxon>
        <taxon>Hyphomicrobiales</taxon>
        <taxon>Rhizobiaceae</taxon>
        <taxon>Sinorhizobium/Ensifer group</taxon>
        <taxon>Sinorhizobium</taxon>
    </lineage>
</organism>
<accession>A6U863</accession>